<reference key="1">
    <citation type="journal article" date="2009" name="BMC Genomics">
        <title>Pseudogene accumulation in the evolutionary histories of Salmonella enterica serovars Paratyphi A and Typhi.</title>
        <authorList>
            <person name="Holt K.E."/>
            <person name="Thomson N.R."/>
            <person name="Wain J."/>
            <person name="Langridge G.C."/>
            <person name="Hasan R."/>
            <person name="Bhutta Z.A."/>
            <person name="Quail M.A."/>
            <person name="Norbertczak H."/>
            <person name="Walker D."/>
            <person name="Simmonds M."/>
            <person name="White B."/>
            <person name="Bason N."/>
            <person name="Mungall K."/>
            <person name="Dougan G."/>
            <person name="Parkhill J."/>
        </authorList>
    </citation>
    <scope>NUCLEOTIDE SEQUENCE [LARGE SCALE GENOMIC DNA]</scope>
    <source>
        <strain>AKU_12601</strain>
    </source>
</reference>
<protein>
    <recommendedName>
        <fullName evidence="1">Protein PsiE</fullName>
    </recommendedName>
</protein>
<feature type="chain" id="PRO_1000136223" description="Protein PsiE">
    <location>
        <begin position="1"/>
        <end position="136"/>
    </location>
</feature>
<feature type="transmembrane region" description="Helical" evidence="1">
    <location>
        <begin position="15"/>
        <end position="35"/>
    </location>
</feature>
<feature type="transmembrane region" description="Helical" evidence="1">
    <location>
        <begin position="55"/>
        <end position="75"/>
    </location>
</feature>
<feature type="transmembrane region" description="Helical" evidence="1">
    <location>
        <begin position="83"/>
        <end position="103"/>
    </location>
</feature>
<feature type="transmembrane region" description="Helical" evidence="1">
    <location>
        <begin position="108"/>
        <end position="128"/>
    </location>
</feature>
<keyword id="KW-0997">Cell inner membrane</keyword>
<keyword id="KW-1003">Cell membrane</keyword>
<keyword id="KW-0472">Membrane</keyword>
<keyword id="KW-0812">Transmembrane</keyword>
<keyword id="KW-1133">Transmembrane helix</keyword>
<gene>
    <name evidence="1" type="primary">psiE</name>
    <name type="ordered locus">SSPA3752</name>
</gene>
<accession>B5BJU9</accession>
<dbReference type="EMBL" id="FM200053">
    <property type="protein sequence ID" value="CAR62036.1"/>
    <property type="molecule type" value="Genomic_DNA"/>
</dbReference>
<dbReference type="RefSeq" id="WP_000982748.1">
    <property type="nucleotide sequence ID" value="NC_011147.1"/>
</dbReference>
<dbReference type="SMR" id="B5BJU9"/>
<dbReference type="KEGG" id="sek:SSPA3752"/>
<dbReference type="HOGENOM" id="CLU_127561_0_1_6"/>
<dbReference type="Proteomes" id="UP000001869">
    <property type="component" value="Chromosome"/>
</dbReference>
<dbReference type="GO" id="GO:0005886">
    <property type="term" value="C:plasma membrane"/>
    <property type="evidence" value="ECO:0007669"/>
    <property type="project" value="UniProtKB-SubCell"/>
</dbReference>
<dbReference type="GO" id="GO:0016036">
    <property type="term" value="P:cellular response to phosphate starvation"/>
    <property type="evidence" value="ECO:0007669"/>
    <property type="project" value="InterPro"/>
</dbReference>
<dbReference type="HAMAP" id="MF_01048">
    <property type="entry name" value="PsiE"/>
    <property type="match status" value="1"/>
</dbReference>
<dbReference type="InterPro" id="IPR009315">
    <property type="entry name" value="P_starv_induced_PsiE"/>
</dbReference>
<dbReference type="InterPro" id="IPR020948">
    <property type="entry name" value="P_starv_induced_PsiE-like"/>
</dbReference>
<dbReference type="NCBIfam" id="NF002764">
    <property type="entry name" value="PRK02833.1-2"/>
    <property type="match status" value="1"/>
</dbReference>
<dbReference type="NCBIfam" id="NF002765">
    <property type="entry name" value="PRK02833.1-3"/>
    <property type="match status" value="1"/>
</dbReference>
<dbReference type="NCBIfam" id="NF002767">
    <property type="entry name" value="PRK02833.1-5"/>
    <property type="match status" value="1"/>
</dbReference>
<dbReference type="PANTHER" id="PTHR37819">
    <property type="entry name" value="PROTEIN PSIE"/>
    <property type="match status" value="1"/>
</dbReference>
<dbReference type="PANTHER" id="PTHR37819:SF1">
    <property type="entry name" value="PROTEIN PSIE"/>
    <property type="match status" value="1"/>
</dbReference>
<dbReference type="Pfam" id="PF06146">
    <property type="entry name" value="PsiE"/>
    <property type="match status" value="1"/>
</dbReference>
<dbReference type="PIRSF" id="PIRSF029598">
    <property type="entry name" value="PsiE"/>
    <property type="match status" value="1"/>
</dbReference>
<evidence type="ECO:0000255" key="1">
    <source>
        <dbReference type="HAMAP-Rule" id="MF_01048"/>
    </source>
</evidence>
<organism>
    <name type="scientific">Salmonella paratyphi A (strain AKU_12601)</name>
    <dbReference type="NCBI Taxonomy" id="554290"/>
    <lineage>
        <taxon>Bacteria</taxon>
        <taxon>Pseudomonadati</taxon>
        <taxon>Pseudomonadota</taxon>
        <taxon>Gammaproteobacteria</taxon>
        <taxon>Enterobacterales</taxon>
        <taxon>Enterobacteriaceae</taxon>
        <taxon>Salmonella</taxon>
    </lineage>
</organism>
<name>PSIE_SALPK</name>
<sequence length="136" mass="15646">MMPLSRSRLEFIATILQNVLNLGLLTLGLILIVFLGKETVHLADALFVPEQASKYELVEGLVIYFLYFEFIALIVKYFKSGLHFPLRYFVYIGITAIVRLIIVDHKTPMDVLLYSAAILLLVITLWLCNSNRLRRE</sequence>
<proteinExistence type="inferred from homology"/>
<comment type="subcellular location">
    <subcellularLocation>
        <location evidence="1">Cell inner membrane</location>
        <topology evidence="1">Multi-pass membrane protein</topology>
    </subcellularLocation>
</comment>
<comment type="similarity">
    <text evidence="1">Belongs to the PsiE family.</text>
</comment>